<accession>Q62005</accession>
<accession>Q62016</accession>
<gene>
    <name type="primary">Zp1</name>
</gene>
<keyword id="KW-1003">Cell membrane</keyword>
<keyword id="KW-0165">Cleavage on pair of basic residues</keyword>
<keyword id="KW-0903">Direct protein sequencing</keyword>
<keyword id="KW-1015">Disulfide bond</keyword>
<keyword id="KW-0272">Extracellular matrix</keyword>
<keyword id="KW-0278">Fertilization</keyword>
<keyword id="KW-0325">Glycoprotein</keyword>
<keyword id="KW-0472">Membrane</keyword>
<keyword id="KW-0873">Pyrrolidone carboxylic acid</keyword>
<keyword id="KW-1185">Reference proteome</keyword>
<keyword id="KW-0964">Secreted</keyword>
<keyword id="KW-0732">Signal</keyword>
<keyword id="KW-0812">Transmembrane</keyword>
<keyword id="KW-1133">Transmembrane helix</keyword>
<name>ZP1_MOUSE</name>
<comment type="function">
    <text>Component of the zona pellucida, an extracellular matrix surrounding oocytes which mediates sperm binding, induction of the acrosome reaction and prevents post-fertilization polyspermy. The zona pellucida is composed of 3 to 4 glycoproteins, ZP1, ZP2, ZP3, and ZP4. ZP1 ensures the structural integrity of the zona pellucida.</text>
</comment>
<comment type="subunit">
    <text evidence="1 3">Polymers of ZP2 and ZP3 organized into long filaments cross-linked by ZP1 homodimers. Interacts with ZP3.</text>
</comment>
<comment type="subcellular location">
    <molecule>Processed zona pellucida sperm-binding protein 1</molecule>
    <subcellularLocation>
        <location evidence="3">Zona pellucida</location>
    </subcellularLocation>
</comment>
<comment type="subcellular location">
    <subcellularLocation>
        <location evidence="2">Cell membrane</location>
        <topology evidence="4">Single-pass type I membrane protein</topology>
    </subcellularLocation>
</comment>
<comment type="tissue specificity">
    <text evidence="9">Expressed in oocytes.</text>
</comment>
<comment type="developmental stage">
    <text evidence="9">Not detected in resting oocytes. As oocytes begin to grow, levels increase to reach a maximum in midsized oocytes. Levels decrease in later stages of oocyte growth.</text>
</comment>
<comment type="domain">
    <text>The ZP domain is involved in the polymerization of the ZP proteins to form the zona pellucida.</text>
</comment>
<comment type="PTM">
    <text>Proteolytically cleaved before the transmembrane segment to yield the secreted ectodomain incorporated in the zona pellucida.</text>
</comment>
<comment type="PTM">
    <text evidence="8">O-glycosylated.</text>
</comment>
<comment type="similarity">
    <text evidence="10">Belongs to the ZP domain family. ZPB subfamily.</text>
</comment>
<evidence type="ECO:0000250" key="1">
    <source>
        <dbReference type="UniProtKB" id="P20239"/>
    </source>
</evidence>
<evidence type="ECO:0000250" key="2">
    <source>
        <dbReference type="UniProtKB" id="P48829"/>
    </source>
</evidence>
<evidence type="ECO:0000250" key="3">
    <source>
        <dbReference type="UniProtKB" id="P60852"/>
    </source>
</evidence>
<evidence type="ECO:0000255" key="4"/>
<evidence type="ECO:0000255" key="5">
    <source>
        <dbReference type="PROSITE-ProRule" id="PRU00375"/>
    </source>
</evidence>
<evidence type="ECO:0000255" key="6">
    <source>
        <dbReference type="PROSITE-ProRule" id="PRU00779"/>
    </source>
</evidence>
<evidence type="ECO:0000256" key="7">
    <source>
        <dbReference type="SAM" id="MobiDB-lite"/>
    </source>
</evidence>
<evidence type="ECO:0000269" key="8">
    <source>
    </source>
</evidence>
<evidence type="ECO:0000269" key="9">
    <source>
    </source>
</evidence>
<evidence type="ECO:0000305" key="10"/>
<evidence type="ECO:0000305" key="11">
    <source>
    </source>
</evidence>
<reference key="1">
    <citation type="journal article" date="1995" name="Development">
        <title>Coordinate expression of the three zona pellucida genes during mouse oogenesis.</title>
        <authorList>
            <person name="Epifano O."/>
            <person name="Liang L.-F."/>
            <person name="Familari M."/>
            <person name="Moos M.C. Jr."/>
            <person name="Dean J."/>
        </authorList>
    </citation>
    <scope>NUCLEOTIDE SEQUENCE [MRNA]</scope>
    <scope>PROTEIN SEQUENCE OF 21-31; 106-114; 409-418 AND 423-433</scope>
    <scope>TISSUE SPECIFICITY</scope>
    <scope>DEVELOPMENTAL STAGE</scope>
    <source>
        <strain>NIH Swiss</strain>
        <tissue>Ovary</tissue>
    </source>
</reference>
<reference key="2">
    <citation type="journal article" date="1995" name="J. Biol. Chem.">
        <title>Mouse Zp1 encodes a zona pellucida protein homologous to egg envelope proteins in mammals and fish.</title>
        <authorList>
            <person name="Epifano O."/>
            <person name="Liang L.-F."/>
            <person name="Dean J."/>
        </authorList>
    </citation>
    <scope>NUCLEOTIDE SEQUENCE [GENOMIC DNA]</scope>
    <source>
        <strain>129/Sv</strain>
    </source>
</reference>
<reference key="3">
    <citation type="journal article" date="2003" name="J. Biol. Chem.">
        <title>Structural characterization of native mouse zona pellucida proteins using mass spectrometry.</title>
        <authorList>
            <person name="Boja E.S."/>
            <person name="Hoodbhoy T."/>
            <person name="Fales H.M."/>
            <person name="Dean J."/>
        </authorList>
    </citation>
    <scope>PROTEIN SEQUENCE OF C-TERMINUS</scope>
    <scope>PYROGLUTAMATE FORMATION AT GLN-21</scope>
    <scope>DISULFIDE BOND FORMATION AT 449-CYS--CYS-470</scope>
    <scope>GLYCOSYLATION AT ASN-49; ASN-68; ASN-240 AND ASN-371</scope>
    <scope>IDENTIFICATION BY MASS SPECTROMETRY</scope>
</reference>
<dbReference type="EMBL" id="U24230">
    <property type="protein sequence ID" value="AAB60507.1"/>
    <property type="molecule type" value="Genomic_DNA"/>
</dbReference>
<dbReference type="EMBL" id="U24227">
    <property type="protein sequence ID" value="AAB60507.1"/>
    <property type="status" value="JOINED"/>
    <property type="molecule type" value="Genomic_DNA"/>
</dbReference>
<dbReference type="EMBL" id="U24228">
    <property type="protein sequence ID" value="AAB60507.1"/>
    <property type="status" value="JOINED"/>
    <property type="molecule type" value="Genomic_DNA"/>
</dbReference>
<dbReference type="EMBL" id="U24229">
    <property type="protein sequence ID" value="AAB60507.1"/>
    <property type="status" value="JOINED"/>
    <property type="molecule type" value="Genomic_DNA"/>
</dbReference>
<dbReference type="EMBL" id="U20448">
    <property type="protein sequence ID" value="AAC48480.1"/>
    <property type="molecule type" value="mRNA"/>
</dbReference>
<dbReference type="CCDS" id="CCDS37918.1"/>
<dbReference type="PIR" id="I46382">
    <property type="entry name" value="I46382"/>
</dbReference>
<dbReference type="RefSeq" id="NP_033606.2">
    <property type="nucleotide sequence ID" value="NM_009580.2"/>
</dbReference>
<dbReference type="SMR" id="Q62005"/>
<dbReference type="FunCoup" id="Q62005">
    <property type="interactions" value="101"/>
</dbReference>
<dbReference type="STRING" id="10090.ENSMUSP00000025641"/>
<dbReference type="GlyConnect" id="635">
    <property type="glycosylation" value="24 N-Linked glycans, 10 O-Linked glycans"/>
</dbReference>
<dbReference type="GlyCosmos" id="Q62005">
    <property type="glycosylation" value="6 sites, 63 glycans"/>
</dbReference>
<dbReference type="GlyGen" id="Q62005">
    <property type="glycosylation" value="8 sites, 48 N-linked glycans (1 site), 15 O-linked glycans (1 site)"/>
</dbReference>
<dbReference type="iPTMnet" id="Q62005"/>
<dbReference type="PhosphoSitePlus" id="Q62005"/>
<dbReference type="PaxDb" id="10090-ENSMUSP00000025641"/>
<dbReference type="ProteomicsDB" id="275047"/>
<dbReference type="Antibodypedia" id="43518">
    <property type="antibodies" value="168 antibodies from 23 providers"/>
</dbReference>
<dbReference type="DNASU" id="22786"/>
<dbReference type="Ensembl" id="ENSMUST00000025641.2">
    <property type="protein sequence ID" value="ENSMUSP00000025641.2"/>
    <property type="gene ID" value="ENSMUSG00000024734.9"/>
</dbReference>
<dbReference type="GeneID" id="22786"/>
<dbReference type="KEGG" id="mmu:22786"/>
<dbReference type="UCSC" id="uc008grh.2">
    <property type="organism name" value="mouse"/>
</dbReference>
<dbReference type="AGR" id="MGI:103073"/>
<dbReference type="CTD" id="22917"/>
<dbReference type="MGI" id="MGI:103073">
    <property type="gene designation" value="Zp1"/>
</dbReference>
<dbReference type="VEuPathDB" id="HostDB:ENSMUSG00000024734"/>
<dbReference type="eggNOG" id="ENOG502RYNN">
    <property type="taxonomic scope" value="Eukaryota"/>
</dbReference>
<dbReference type="GeneTree" id="ENSGT00940000161188"/>
<dbReference type="HOGENOM" id="CLU_034433_0_0_1"/>
<dbReference type="InParanoid" id="Q62005"/>
<dbReference type="OMA" id="RFEVNNC"/>
<dbReference type="OrthoDB" id="9907024at2759"/>
<dbReference type="PhylomeDB" id="Q62005"/>
<dbReference type="TreeFam" id="TF332794"/>
<dbReference type="Reactome" id="R-MMU-2534343">
    <property type="pathway name" value="Interaction With Cumulus Cells And The Zona Pellucida"/>
</dbReference>
<dbReference type="BioGRID-ORCS" id="22786">
    <property type="hits" value="1 hit in 78 CRISPR screens"/>
</dbReference>
<dbReference type="ChiTaRS" id="Zp1">
    <property type="organism name" value="mouse"/>
</dbReference>
<dbReference type="PRO" id="PR:Q62005"/>
<dbReference type="Proteomes" id="UP000000589">
    <property type="component" value="Chromosome 19"/>
</dbReference>
<dbReference type="RNAct" id="Q62005">
    <property type="molecule type" value="protein"/>
</dbReference>
<dbReference type="Bgee" id="ENSMUSG00000024734">
    <property type="expression patterns" value="Expressed in primary oocyte and 18 other cell types or tissues"/>
</dbReference>
<dbReference type="ExpressionAtlas" id="Q62005">
    <property type="expression patterns" value="baseline and differential"/>
</dbReference>
<dbReference type="GO" id="GO:0062023">
    <property type="term" value="C:collagen-containing extracellular matrix"/>
    <property type="evidence" value="ECO:0000314"/>
    <property type="project" value="UniProtKB"/>
</dbReference>
<dbReference type="GO" id="GO:0035805">
    <property type="term" value="C:egg coat"/>
    <property type="evidence" value="ECO:0000250"/>
    <property type="project" value="UniProtKB"/>
</dbReference>
<dbReference type="GO" id="GO:0005576">
    <property type="term" value="C:extracellular region"/>
    <property type="evidence" value="ECO:0007669"/>
    <property type="project" value="UniProtKB-KW"/>
</dbReference>
<dbReference type="GO" id="GO:0005886">
    <property type="term" value="C:plasma membrane"/>
    <property type="evidence" value="ECO:0007669"/>
    <property type="project" value="UniProtKB-SubCell"/>
</dbReference>
<dbReference type="GO" id="GO:0035804">
    <property type="term" value="F:structural constituent of egg coat"/>
    <property type="evidence" value="ECO:0000250"/>
    <property type="project" value="UniProtKB"/>
</dbReference>
<dbReference type="GO" id="GO:0007338">
    <property type="term" value="P:single fertilization"/>
    <property type="evidence" value="ECO:0007669"/>
    <property type="project" value="UniProtKB-KW"/>
</dbReference>
<dbReference type="CDD" id="cd00111">
    <property type="entry name" value="Trefoil"/>
    <property type="match status" value="1"/>
</dbReference>
<dbReference type="FunFam" id="2.60.40.3210:FF:000007">
    <property type="entry name" value="Zona pellucida glycoprotein 1"/>
    <property type="match status" value="1"/>
</dbReference>
<dbReference type="Gene3D" id="2.60.40.4100">
    <property type="entry name" value="Zona pellucida, ZP-C domain"/>
    <property type="match status" value="1"/>
</dbReference>
<dbReference type="Gene3D" id="2.60.40.3210">
    <property type="entry name" value="Zona pellucida, ZP-N domain"/>
    <property type="match status" value="1"/>
</dbReference>
<dbReference type="InterPro" id="IPR017957">
    <property type="entry name" value="P_trefoil_CS"/>
</dbReference>
<dbReference type="InterPro" id="IPR000519">
    <property type="entry name" value="P_trefoil_dom"/>
</dbReference>
<dbReference type="InterPro" id="IPR044913">
    <property type="entry name" value="P_trefoil_dom_sf"/>
</dbReference>
<dbReference type="InterPro" id="IPR051148">
    <property type="entry name" value="Zona_Pellucida_Domain_gp"/>
</dbReference>
<dbReference type="InterPro" id="IPR055355">
    <property type="entry name" value="ZP-C"/>
</dbReference>
<dbReference type="InterPro" id="IPR042235">
    <property type="entry name" value="ZP-C_dom"/>
</dbReference>
<dbReference type="InterPro" id="IPR055356">
    <property type="entry name" value="ZP-N"/>
</dbReference>
<dbReference type="InterPro" id="IPR054554">
    <property type="entry name" value="ZP1/4_Ig-like"/>
</dbReference>
<dbReference type="InterPro" id="IPR048290">
    <property type="entry name" value="ZP_chr"/>
</dbReference>
<dbReference type="InterPro" id="IPR001507">
    <property type="entry name" value="ZP_dom"/>
</dbReference>
<dbReference type="InterPro" id="IPR017977">
    <property type="entry name" value="ZP_dom_CS"/>
</dbReference>
<dbReference type="PANTHER" id="PTHR23343">
    <property type="entry name" value="ZONA PELLUCIDA SPERM-BINDING PROTEIN"/>
    <property type="match status" value="1"/>
</dbReference>
<dbReference type="PANTHER" id="PTHR23343:SF41">
    <property type="entry name" value="ZONA PELLUCIDA SPERM-BINDING PROTEIN 1"/>
    <property type="match status" value="1"/>
</dbReference>
<dbReference type="Pfam" id="PF00088">
    <property type="entry name" value="Trefoil"/>
    <property type="match status" value="1"/>
</dbReference>
<dbReference type="Pfam" id="PF00100">
    <property type="entry name" value="Zona_pellucida"/>
    <property type="match status" value="1"/>
</dbReference>
<dbReference type="Pfam" id="PF23344">
    <property type="entry name" value="ZP-N"/>
    <property type="match status" value="1"/>
</dbReference>
<dbReference type="Pfam" id="PF22821">
    <property type="entry name" value="ZP1_ZP4_Ig-like"/>
    <property type="match status" value="1"/>
</dbReference>
<dbReference type="PRINTS" id="PR00023">
    <property type="entry name" value="ZPELLUCIDA"/>
</dbReference>
<dbReference type="SMART" id="SM00018">
    <property type="entry name" value="PD"/>
    <property type="match status" value="1"/>
</dbReference>
<dbReference type="SMART" id="SM00241">
    <property type="entry name" value="ZP"/>
    <property type="match status" value="1"/>
</dbReference>
<dbReference type="SUPFAM" id="SSF57492">
    <property type="entry name" value="Trefoil"/>
    <property type="match status" value="1"/>
</dbReference>
<dbReference type="PROSITE" id="PS00025">
    <property type="entry name" value="P_TREFOIL_1"/>
    <property type="match status" value="1"/>
</dbReference>
<dbReference type="PROSITE" id="PS51448">
    <property type="entry name" value="P_TREFOIL_2"/>
    <property type="match status" value="1"/>
</dbReference>
<dbReference type="PROSITE" id="PS00682">
    <property type="entry name" value="ZP_1"/>
    <property type="match status" value="1"/>
</dbReference>
<dbReference type="PROSITE" id="PS51034">
    <property type="entry name" value="ZP_2"/>
    <property type="match status" value="1"/>
</dbReference>
<feature type="signal peptide" evidence="8 9">
    <location>
        <begin position="1"/>
        <end position="20"/>
    </location>
</feature>
<feature type="chain" id="PRO_0000041679" description="Zona pellucida sperm-binding protein 1">
    <location>
        <begin position="21"/>
        <end position="546"/>
    </location>
</feature>
<feature type="chain" id="PRO_0000304554" description="Processed zona pellucida sperm-binding protein 1">
    <location>
        <begin position="21"/>
        <end status="unknown"/>
    </location>
</feature>
<feature type="propeptide" id="PRO_0000041680" description="Removed in mature form" evidence="8">
    <location>
        <begin position="547"/>
        <end position="623"/>
    </location>
</feature>
<feature type="topological domain" description="Extracellular" evidence="4">
    <location>
        <begin position="21"/>
        <end position="590"/>
    </location>
</feature>
<feature type="transmembrane region" description="Helical" evidence="4">
    <location>
        <begin position="591"/>
        <end position="611"/>
    </location>
</feature>
<feature type="topological domain" description="Cytoplasmic" evidence="4">
    <location>
        <begin position="612"/>
        <end position="623"/>
    </location>
</feature>
<feature type="domain" description="P-type" evidence="6">
    <location>
        <begin position="226"/>
        <end position="266"/>
    </location>
</feature>
<feature type="domain" description="ZP" evidence="5">
    <location>
        <begin position="271"/>
        <end position="542"/>
    </location>
</feature>
<feature type="region of interest" description="Disordered" evidence="7">
    <location>
        <begin position="182"/>
        <end position="201"/>
    </location>
</feature>
<feature type="modified residue" description="Pyrrolidone carboxylic acid" evidence="8">
    <location>
        <position position="21"/>
    </location>
</feature>
<feature type="glycosylation site" description="N-linked (GlcNAc...) asparagine" evidence="8">
    <location>
        <position position="49"/>
    </location>
</feature>
<feature type="glycosylation site" description="N-linked (GlcNAc...) asparagine" evidence="8">
    <location>
        <position position="68"/>
    </location>
</feature>
<feature type="glycosylation site" description="N-linked (GlcNAc...) asparagine" evidence="8">
    <location>
        <position position="240"/>
    </location>
</feature>
<feature type="glycosylation site" description="N-linked (GlcNAc...) asparagine" evidence="8">
    <location>
        <position position="371"/>
    </location>
</feature>
<feature type="glycosylation site" description="N-linked (GlcNAc...) asparagine" evidence="4">
    <location>
        <position position="554"/>
    </location>
</feature>
<feature type="glycosylation site" description="N-linked (GlcNAc...) asparagine" evidence="4">
    <location>
        <position position="585"/>
    </location>
</feature>
<feature type="disulfide bond" evidence="6">
    <location>
        <begin position="228"/>
        <end position="253"/>
    </location>
</feature>
<feature type="disulfide bond" evidence="6">
    <location>
        <begin position="237"/>
        <end position="252"/>
    </location>
</feature>
<feature type="disulfide bond" evidence="6">
    <location>
        <begin position="247"/>
        <end position="262"/>
    </location>
</feature>
<feature type="disulfide bond" evidence="11">
    <location>
        <begin position="449"/>
        <end position="470"/>
    </location>
</feature>
<feature type="sequence conflict" description="In Ref. 1; AAC48480." evidence="10" ref="1">
    <original>T</original>
    <variation>A</variation>
    <location>
        <position position="246"/>
    </location>
</feature>
<feature type="sequence conflict" description="In Ref. 1; AAC48480." evidence="10" ref="1">
    <original>V</original>
    <variation>L</variation>
    <location>
        <position position="445"/>
    </location>
</feature>
<feature type="sequence conflict" description="In Ref. 1; AAC48480." evidence="10" ref="1">
    <original>R</original>
    <variation>K</variation>
    <location>
        <position position="486"/>
    </location>
</feature>
<protein>
    <recommendedName>
        <fullName>Zona pellucida sperm-binding protein 1</fullName>
    </recommendedName>
    <alternativeName>
        <fullName>Zona pellucida glycoprotein 1</fullName>
        <shortName>Zp-1</shortName>
    </alternativeName>
    <component>
        <recommendedName>
            <fullName>Processed zona pellucida sperm-binding protein 1</fullName>
        </recommendedName>
    </component>
</protein>
<proteinExistence type="evidence at protein level"/>
<organism>
    <name type="scientific">Mus musculus</name>
    <name type="common">Mouse</name>
    <dbReference type="NCBI Taxonomy" id="10090"/>
    <lineage>
        <taxon>Eukaryota</taxon>
        <taxon>Metazoa</taxon>
        <taxon>Chordata</taxon>
        <taxon>Craniata</taxon>
        <taxon>Vertebrata</taxon>
        <taxon>Euteleostomi</taxon>
        <taxon>Mammalia</taxon>
        <taxon>Eutheria</taxon>
        <taxon>Euarchontoglires</taxon>
        <taxon>Glires</taxon>
        <taxon>Rodentia</taxon>
        <taxon>Myomorpha</taxon>
        <taxon>Muroidea</taxon>
        <taxon>Muridae</taxon>
        <taxon>Murinae</taxon>
        <taxon>Mus</taxon>
        <taxon>Mus</taxon>
    </lineage>
</organism>
<sequence length="623" mass="68723">MAWGCFVVLLLLAAAPLRLGQRLHLEPGFEYSYDCGVRGMQLLVFPRPNQTVQFKVLDEFGNRFEVNNCSICYHWVTSEAQEHTVFSADYKGCHVLEKDGRFHLRVFIQAVLPNGRVDIAQDVTLICPKPDHTVTPDPYLAPPTTPEPFTPHAFALHPIPDHTLAGSGHTGLTTLYPEQSFIHPTPAPPSLGPGPAGSTVPHSQWGTLEPWELTELDSVGTHLPQERCQVASGHIPCMVNGSSKETCQQAGCCYDSTKEEPCYYGNTVTLQCFKSGYFTLVMSQETALTHGVLLDNVHLAYAPNGCPPTQKTSAFVVFHVPLTLCGTAIQVVGEQLIYENQLVSDIDVQKGPQGSITRDSAFRLHVRCIFNASDFLPIQASIFSPQPPAPVTQSGPLRLELRIATDKTFSSYYQGSDYPLVRLLREPVYVEVRLLQRTDPSLVLVLHQCWATPTTSPFEQPQWPILSDGCPFKGDNYRTQVVAADREALPFWSHYQRFTITTFMLLDSSSQNALRGQVYFFCSASACHPLGSDTCSTTCDSGIARRRRSSGHHNITLRALDIVSSPGAVGFEDAAKLEPSGSSRNSSSRMLLLLLAITLALAAGIFVGLIWAWAQKLWEGIRY</sequence>